<protein>
    <recommendedName>
        <fullName evidence="2">tRNA (guanine-N(7)-)-methyltransferase</fullName>
        <ecNumber evidence="2">2.1.1.33</ecNumber>
    </recommendedName>
    <alternativeName>
        <fullName evidence="2">tRNA (guanine(46)-N(7))-methyltransferase</fullName>
    </alternativeName>
    <alternativeName>
        <fullName evidence="2">tRNA(m7G46)-methyltransferase</fullName>
    </alternativeName>
</protein>
<name>TRMB_SHIFL</name>
<feature type="chain" id="PRO_0000171387" description="tRNA (guanine-N(7)-)-methyltransferase">
    <location>
        <begin position="1"/>
        <end position="239"/>
    </location>
</feature>
<feature type="region of interest" description="Interaction with RNA" evidence="2">
    <location>
        <begin position="150"/>
        <end position="155"/>
    </location>
</feature>
<feature type="active site" evidence="1">
    <location>
        <position position="144"/>
    </location>
</feature>
<feature type="binding site" evidence="2">
    <location>
        <position position="69"/>
    </location>
    <ligand>
        <name>S-adenosyl-L-methionine</name>
        <dbReference type="ChEBI" id="CHEBI:59789"/>
    </ligand>
</feature>
<feature type="binding site" evidence="2">
    <location>
        <position position="94"/>
    </location>
    <ligand>
        <name>S-adenosyl-L-methionine</name>
        <dbReference type="ChEBI" id="CHEBI:59789"/>
    </ligand>
</feature>
<feature type="binding site" evidence="2">
    <location>
        <position position="121"/>
    </location>
    <ligand>
        <name>S-adenosyl-L-methionine</name>
        <dbReference type="ChEBI" id="CHEBI:59789"/>
    </ligand>
</feature>
<feature type="binding site" evidence="2">
    <location>
        <position position="144"/>
    </location>
    <ligand>
        <name>S-adenosyl-L-methionine</name>
        <dbReference type="ChEBI" id="CHEBI:59789"/>
    </ligand>
</feature>
<feature type="binding site" evidence="2">
    <location>
        <position position="148"/>
    </location>
    <ligand>
        <name>substrate</name>
    </ligand>
</feature>
<feature type="binding site" evidence="2">
    <location>
        <position position="180"/>
    </location>
    <ligand>
        <name>substrate</name>
    </ligand>
</feature>
<feature type="binding site" evidence="2">
    <location>
        <begin position="217"/>
        <end position="220"/>
    </location>
    <ligand>
        <name>substrate</name>
    </ligand>
</feature>
<dbReference type="EC" id="2.1.1.33" evidence="2"/>
<dbReference type="EMBL" id="AE005674">
    <property type="protein sequence ID" value="AAN44438.1"/>
    <property type="molecule type" value="Genomic_DNA"/>
</dbReference>
<dbReference type="EMBL" id="AE014073">
    <property type="protein sequence ID" value="AAP18262.1"/>
    <property type="molecule type" value="Genomic_DNA"/>
</dbReference>
<dbReference type="RefSeq" id="NP_708731.1">
    <property type="nucleotide sequence ID" value="NC_004337.2"/>
</dbReference>
<dbReference type="RefSeq" id="WP_000786911.1">
    <property type="nucleotide sequence ID" value="NZ_WPGW01000067.1"/>
</dbReference>
<dbReference type="SMR" id="P0A8I7"/>
<dbReference type="STRING" id="198214.SF2957"/>
<dbReference type="PaxDb" id="198214-SF2957"/>
<dbReference type="GeneID" id="1026825"/>
<dbReference type="GeneID" id="93779031"/>
<dbReference type="KEGG" id="sfl:SF2957"/>
<dbReference type="KEGG" id="sfx:S3160"/>
<dbReference type="PATRIC" id="fig|198214.7.peg.3515"/>
<dbReference type="HOGENOM" id="CLU_050910_0_1_6"/>
<dbReference type="UniPathway" id="UPA00989"/>
<dbReference type="Proteomes" id="UP000001006">
    <property type="component" value="Chromosome"/>
</dbReference>
<dbReference type="Proteomes" id="UP000002673">
    <property type="component" value="Chromosome"/>
</dbReference>
<dbReference type="GO" id="GO:0043527">
    <property type="term" value="C:tRNA methyltransferase complex"/>
    <property type="evidence" value="ECO:0007669"/>
    <property type="project" value="TreeGrafter"/>
</dbReference>
<dbReference type="GO" id="GO:0008176">
    <property type="term" value="F:tRNA (guanine(46)-N7)-methyltransferase activity"/>
    <property type="evidence" value="ECO:0007669"/>
    <property type="project" value="UniProtKB-UniRule"/>
</dbReference>
<dbReference type="FunFam" id="3.40.50.150:FF:000024">
    <property type="entry name" value="tRNA (guanine-N(7)-)-methyltransferase"/>
    <property type="match status" value="1"/>
</dbReference>
<dbReference type="Gene3D" id="3.40.50.150">
    <property type="entry name" value="Vaccinia Virus protein VP39"/>
    <property type="match status" value="1"/>
</dbReference>
<dbReference type="HAMAP" id="MF_01057">
    <property type="entry name" value="tRNA_methyltr_TrmB"/>
    <property type="match status" value="1"/>
</dbReference>
<dbReference type="InterPro" id="IPR029063">
    <property type="entry name" value="SAM-dependent_MTases_sf"/>
</dbReference>
<dbReference type="InterPro" id="IPR003358">
    <property type="entry name" value="tRNA_(Gua-N-7)_MeTrfase_Trmb"/>
</dbReference>
<dbReference type="InterPro" id="IPR055361">
    <property type="entry name" value="tRNA_methyltr_TrmB_bact"/>
</dbReference>
<dbReference type="NCBIfam" id="TIGR00091">
    <property type="entry name" value="tRNA (guanosine(46)-N7)-methyltransferase TrmB"/>
    <property type="match status" value="1"/>
</dbReference>
<dbReference type="PANTHER" id="PTHR23417">
    <property type="entry name" value="3-DEOXY-D-MANNO-OCTULOSONIC-ACID TRANSFERASE/TRNA GUANINE-N 7 - -METHYLTRANSFERASE"/>
    <property type="match status" value="1"/>
</dbReference>
<dbReference type="PANTHER" id="PTHR23417:SF14">
    <property type="entry name" value="PENTACOTRIPEPTIDE-REPEAT REGION OF PRORP DOMAIN-CONTAINING PROTEIN"/>
    <property type="match status" value="1"/>
</dbReference>
<dbReference type="Pfam" id="PF02390">
    <property type="entry name" value="Methyltransf_4"/>
    <property type="match status" value="1"/>
</dbReference>
<dbReference type="SUPFAM" id="SSF53335">
    <property type="entry name" value="S-adenosyl-L-methionine-dependent methyltransferases"/>
    <property type="match status" value="1"/>
</dbReference>
<dbReference type="PROSITE" id="PS51625">
    <property type="entry name" value="SAM_MT_TRMB"/>
    <property type="match status" value="1"/>
</dbReference>
<keyword id="KW-0489">Methyltransferase</keyword>
<keyword id="KW-1185">Reference proteome</keyword>
<keyword id="KW-0949">S-adenosyl-L-methionine</keyword>
<keyword id="KW-0808">Transferase</keyword>
<keyword id="KW-0819">tRNA processing</keyword>
<reference key="1">
    <citation type="journal article" date="2002" name="Nucleic Acids Res.">
        <title>Genome sequence of Shigella flexneri 2a: insights into pathogenicity through comparison with genomes of Escherichia coli K12 and O157.</title>
        <authorList>
            <person name="Jin Q."/>
            <person name="Yuan Z."/>
            <person name="Xu J."/>
            <person name="Wang Y."/>
            <person name="Shen Y."/>
            <person name="Lu W."/>
            <person name="Wang J."/>
            <person name="Liu H."/>
            <person name="Yang J."/>
            <person name="Yang F."/>
            <person name="Zhang X."/>
            <person name="Zhang J."/>
            <person name="Yang G."/>
            <person name="Wu H."/>
            <person name="Qu D."/>
            <person name="Dong J."/>
            <person name="Sun L."/>
            <person name="Xue Y."/>
            <person name="Zhao A."/>
            <person name="Gao Y."/>
            <person name="Zhu J."/>
            <person name="Kan B."/>
            <person name="Ding K."/>
            <person name="Chen S."/>
            <person name="Cheng H."/>
            <person name="Yao Z."/>
            <person name="He B."/>
            <person name="Chen R."/>
            <person name="Ma D."/>
            <person name="Qiang B."/>
            <person name="Wen Y."/>
            <person name="Hou Y."/>
            <person name="Yu J."/>
        </authorList>
    </citation>
    <scope>NUCLEOTIDE SEQUENCE [LARGE SCALE GENOMIC DNA]</scope>
    <source>
        <strain>301 / Serotype 2a</strain>
    </source>
</reference>
<reference key="2">
    <citation type="journal article" date="2003" name="Infect. Immun.">
        <title>Complete genome sequence and comparative genomics of Shigella flexneri serotype 2a strain 2457T.</title>
        <authorList>
            <person name="Wei J."/>
            <person name="Goldberg M.B."/>
            <person name="Burland V."/>
            <person name="Venkatesan M.M."/>
            <person name="Deng W."/>
            <person name="Fournier G."/>
            <person name="Mayhew G.F."/>
            <person name="Plunkett G. III"/>
            <person name="Rose D.J."/>
            <person name="Darling A."/>
            <person name="Mau B."/>
            <person name="Perna N.T."/>
            <person name="Payne S.M."/>
            <person name="Runyen-Janecky L.J."/>
            <person name="Zhou S."/>
            <person name="Schwartz D.C."/>
            <person name="Blattner F.R."/>
        </authorList>
    </citation>
    <scope>NUCLEOTIDE SEQUENCE [LARGE SCALE GENOMIC DNA]</scope>
    <source>
        <strain>ATCC 700930 / 2457T / Serotype 2a</strain>
    </source>
</reference>
<accession>P0A8I7</accession>
<accession>P32049</accession>
<accession>P58089</accession>
<evidence type="ECO:0000250" key="1"/>
<evidence type="ECO:0000255" key="2">
    <source>
        <dbReference type="HAMAP-Rule" id="MF_01057"/>
    </source>
</evidence>
<gene>
    <name evidence="2" type="primary">trmB</name>
    <name type="ordered locus">SF2957</name>
    <name type="ordered locus">S3160</name>
</gene>
<comment type="function">
    <text evidence="2">Catalyzes the formation of N(7)-methylguanine at position 46 (m7G46) in tRNA.</text>
</comment>
<comment type="catalytic activity">
    <reaction evidence="2">
        <text>guanosine(46) in tRNA + S-adenosyl-L-methionine = N(7)-methylguanosine(46) in tRNA + S-adenosyl-L-homocysteine</text>
        <dbReference type="Rhea" id="RHEA:42708"/>
        <dbReference type="Rhea" id="RHEA-COMP:10188"/>
        <dbReference type="Rhea" id="RHEA-COMP:10189"/>
        <dbReference type="ChEBI" id="CHEBI:57856"/>
        <dbReference type="ChEBI" id="CHEBI:59789"/>
        <dbReference type="ChEBI" id="CHEBI:74269"/>
        <dbReference type="ChEBI" id="CHEBI:74480"/>
        <dbReference type="EC" id="2.1.1.33"/>
    </reaction>
</comment>
<comment type="pathway">
    <text evidence="2">tRNA modification; N(7)-methylguanine-tRNA biosynthesis.</text>
</comment>
<comment type="subunit">
    <text evidence="2">Monomer.</text>
</comment>
<comment type="similarity">
    <text evidence="2">Belongs to the class I-like SAM-binding methyltransferase superfamily. TrmB family.</text>
</comment>
<organism>
    <name type="scientific">Shigella flexneri</name>
    <dbReference type="NCBI Taxonomy" id="623"/>
    <lineage>
        <taxon>Bacteria</taxon>
        <taxon>Pseudomonadati</taxon>
        <taxon>Pseudomonadota</taxon>
        <taxon>Gammaproteobacteria</taxon>
        <taxon>Enterobacterales</taxon>
        <taxon>Enterobacteriaceae</taxon>
        <taxon>Shigella</taxon>
    </lineage>
</organism>
<sequence length="239" mass="27307">MKNDVISPEFDENGRPLRRIRSFVRRQGRLTKGQEHALENYWPVMGVEFSEDMLDFPALFGREAPVTLEIGFGMGASLVAMAKDRPEQDFLGIEVHSPGVGACLASAHEEGLSNLRVMCHDAVEVLHKMIPDNSLRMVQLFFPDPWHKARHNKRRIVQVPFAELVKSKLQLGGVFHMATDWEPYAEHMLEVMSSIDGYKNLSESNDYVPRPASRPVTKFEQRGHRLGHGVWDLMFERVK</sequence>
<proteinExistence type="inferred from homology"/>